<sequence length="473" mass="53010">MADGEESISVAWQSVLDKLETDDRITPQLHGFLSLVEPKGIMAGTFYLEVPNEFTRGMIEQRSRVPLLNAIGTLDNTLAVTTFAIVVNPEIQQESLSTVGEPEPTPAPYLDVATFTVAPPAEITAPPRNGDTRLNSKYSFDNFVIGQSNRFAHAAAVAVAEAPAKAYNPLFIYGDSGLGKTHLLHAIGHYAMSLYPGIRVRYVSSEEFTNDFINSIANNRGSSFQARYRNIDILLIDDIQFLQRAVETQEAFFHTFNTLHDHNKQVVITSDLPPKHLTGFEDRMRSRFEWGLITDVQVPDLETRIAILRKKAQSEKIQVPDDILEFMASKISSNIRELEGTLIRVTAFASLNRTPVDMPLVQTVLKDLITLDDDNVIAPTDIITNTAEYFKLTVDDLYGSSRSQAVATARQIAMYLCRELTNLSLPKIGQLFGGRDHTTVMYANKKISELMKERRSIYNQVTELTSRIKQNHR</sequence>
<proteinExistence type="inferred from homology"/>
<protein>
    <recommendedName>
        <fullName evidence="1">Chromosomal replication initiator protein DnaA</fullName>
    </recommendedName>
</protein>
<comment type="function">
    <text evidence="1">Plays an essential role in the initiation and regulation of chromosomal replication. ATP-DnaA binds to the origin of replication (oriC) to initiate formation of the DNA replication initiation complex once per cell cycle. Binds the DnaA box (a 9 base pair repeat at the origin) and separates the double-stranded (ds)DNA. Forms a right-handed helical filament on oriC DNA; dsDNA binds to the exterior of the filament while single-stranded (ss)DNA is stabiized in the filament's interior. The ATP-DnaA-oriC complex binds and stabilizes one strand of the AT-rich DNA unwinding element (DUE), permitting loading of DNA polymerase. After initiation quickly degrades to an ADP-DnaA complex that is not apt for DNA replication. Binds acidic phospholipids.</text>
</comment>
<comment type="subunit">
    <text evidence="1">Oligomerizes as a right-handed, spiral filament on DNA at oriC.</text>
</comment>
<comment type="subcellular location">
    <subcellularLocation>
        <location evidence="1">Cytoplasm</location>
    </subcellularLocation>
</comment>
<comment type="domain">
    <text evidence="1">Domain I is involved in oligomerization and binding regulators, domain II is flexibile and of varying length in different bacteria, domain III forms the AAA+ region, while domain IV binds dsDNA.</text>
</comment>
<comment type="similarity">
    <text evidence="1">Belongs to the DnaA family.</text>
</comment>
<reference key="1">
    <citation type="journal article" date="2004" name="Mol. Plant Microbe Interact.">
        <title>The genome sequence of the Gram-positive sugarcane pathogen Leifsonia xyli subsp. xyli.</title>
        <authorList>
            <person name="Monteiro-Vitorello C.B."/>
            <person name="Camargo L.E.A."/>
            <person name="Van Sluys M.A."/>
            <person name="Kitajima J.P."/>
            <person name="Truffi D."/>
            <person name="do Amaral A.M."/>
            <person name="Harakava R."/>
            <person name="de Oliveira J.C.F."/>
            <person name="Wood D."/>
            <person name="de Oliveira M.C."/>
            <person name="Miyaki C.Y."/>
            <person name="Takita M.A."/>
            <person name="da Silva A.C.R."/>
            <person name="Furlan L.R."/>
            <person name="Carraro D.M."/>
            <person name="Camarotte G."/>
            <person name="Almeida N.F. Jr."/>
            <person name="Carrer H."/>
            <person name="Coutinho L.L."/>
            <person name="El-Dorry H.A."/>
            <person name="Ferro M.I.T."/>
            <person name="Gagliardi P.R."/>
            <person name="Giglioti E."/>
            <person name="Goldman M.H.S."/>
            <person name="Goldman G.H."/>
            <person name="Kimura E.T."/>
            <person name="Ferro E.S."/>
            <person name="Kuramae E.E."/>
            <person name="Lemos E.G.M."/>
            <person name="Lemos M.V.F."/>
            <person name="Mauro S.M.Z."/>
            <person name="Machado M.A."/>
            <person name="Marino C.L."/>
            <person name="Menck C.F."/>
            <person name="Nunes L.R."/>
            <person name="Oliveira R.C."/>
            <person name="Pereira G.G."/>
            <person name="Siqueira W."/>
            <person name="de Souza A.A."/>
            <person name="Tsai S.M."/>
            <person name="Zanca A.S."/>
            <person name="Simpson A.J.G."/>
            <person name="Brumbley S.M."/>
            <person name="Setubal J.C."/>
        </authorList>
    </citation>
    <scope>NUCLEOTIDE SEQUENCE [LARGE SCALE GENOMIC DNA]</scope>
    <source>
        <strain>CTCB07</strain>
    </source>
</reference>
<feature type="chain" id="PRO_0000114198" description="Chromosomal replication initiator protein DnaA">
    <location>
        <begin position="1"/>
        <end position="473"/>
    </location>
</feature>
<feature type="region of interest" description="Domain I, interacts with DnaA modulators" evidence="1">
    <location>
        <begin position="1"/>
        <end position="87"/>
    </location>
</feature>
<feature type="region of interest" description="Domain II" evidence="1">
    <location>
        <begin position="87"/>
        <end position="132"/>
    </location>
</feature>
<feature type="region of interest" description="Domain III, AAA+ region" evidence="1">
    <location>
        <begin position="133"/>
        <end position="349"/>
    </location>
</feature>
<feature type="region of interest" description="Domain IV, binds dsDNA" evidence="1">
    <location>
        <begin position="350"/>
        <end position="473"/>
    </location>
</feature>
<feature type="binding site" evidence="1">
    <location>
        <position position="177"/>
    </location>
    <ligand>
        <name>ATP</name>
        <dbReference type="ChEBI" id="CHEBI:30616"/>
    </ligand>
</feature>
<feature type="binding site" evidence="1">
    <location>
        <position position="179"/>
    </location>
    <ligand>
        <name>ATP</name>
        <dbReference type="ChEBI" id="CHEBI:30616"/>
    </ligand>
</feature>
<feature type="binding site" evidence="1">
    <location>
        <position position="180"/>
    </location>
    <ligand>
        <name>ATP</name>
        <dbReference type="ChEBI" id="CHEBI:30616"/>
    </ligand>
</feature>
<feature type="binding site" evidence="1">
    <location>
        <position position="181"/>
    </location>
    <ligand>
        <name>ATP</name>
        <dbReference type="ChEBI" id="CHEBI:30616"/>
    </ligand>
</feature>
<accession>Q6AHN6</accession>
<organism>
    <name type="scientific">Leifsonia xyli subsp. xyli (strain CTCB07)</name>
    <dbReference type="NCBI Taxonomy" id="281090"/>
    <lineage>
        <taxon>Bacteria</taxon>
        <taxon>Bacillati</taxon>
        <taxon>Actinomycetota</taxon>
        <taxon>Actinomycetes</taxon>
        <taxon>Micrococcales</taxon>
        <taxon>Microbacteriaceae</taxon>
        <taxon>Leifsonia</taxon>
    </lineage>
</organism>
<dbReference type="EMBL" id="AE016822">
    <property type="protein sequence ID" value="AAT88109.1"/>
    <property type="molecule type" value="Genomic_DNA"/>
</dbReference>
<dbReference type="RefSeq" id="WP_011185114.1">
    <property type="nucleotide sequence ID" value="NC_006087.1"/>
</dbReference>
<dbReference type="SMR" id="Q6AHN6"/>
<dbReference type="STRING" id="281090.Lxx00010"/>
<dbReference type="KEGG" id="lxx:Lxx00010"/>
<dbReference type="eggNOG" id="COG0593">
    <property type="taxonomic scope" value="Bacteria"/>
</dbReference>
<dbReference type="HOGENOM" id="CLU_026910_2_0_11"/>
<dbReference type="Proteomes" id="UP000001306">
    <property type="component" value="Chromosome"/>
</dbReference>
<dbReference type="GO" id="GO:0005737">
    <property type="term" value="C:cytoplasm"/>
    <property type="evidence" value="ECO:0007669"/>
    <property type="project" value="UniProtKB-SubCell"/>
</dbReference>
<dbReference type="GO" id="GO:0005886">
    <property type="term" value="C:plasma membrane"/>
    <property type="evidence" value="ECO:0007669"/>
    <property type="project" value="TreeGrafter"/>
</dbReference>
<dbReference type="GO" id="GO:0005524">
    <property type="term" value="F:ATP binding"/>
    <property type="evidence" value="ECO:0007669"/>
    <property type="project" value="UniProtKB-UniRule"/>
</dbReference>
<dbReference type="GO" id="GO:0016887">
    <property type="term" value="F:ATP hydrolysis activity"/>
    <property type="evidence" value="ECO:0007669"/>
    <property type="project" value="InterPro"/>
</dbReference>
<dbReference type="GO" id="GO:0003688">
    <property type="term" value="F:DNA replication origin binding"/>
    <property type="evidence" value="ECO:0007669"/>
    <property type="project" value="UniProtKB-UniRule"/>
</dbReference>
<dbReference type="GO" id="GO:0008289">
    <property type="term" value="F:lipid binding"/>
    <property type="evidence" value="ECO:0007669"/>
    <property type="project" value="UniProtKB-KW"/>
</dbReference>
<dbReference type="GO" id="GO:0006270">
    <property type="term" value="P:DNA replication initiation"/>
    <property type="evidence" value="ECO:0007669"/>
    <property type="project" value="UniProtKB-UniRule"/>
</dbReference>
<dbReference type="GO" id="GO:0006275">
    <property type="term" value="P:regulation of DNA replication"/>
    <property type="evidence" value="ECO:0007669"/>
    <property type="project" value="UniProtKB-UniRule"/>
</dbReference>
<dbReference type="CDD" id="cd00009">
    <property type="entry name" value="AAA"/>
    <property type="match status" value="1"/>
</dbReference>
<dbReference type="CDD" id="cd06571">
    <property type="entry name" value="Bac_DnaA_C"/>
    <property type="match status" value="1"/>
</dbReference>
<dbReference type="FunFam" id="1.10.1750.10:FF:000002">
    <property type="entry name" value="Chromosomal replication initiator protein DnaA"/>
    <property type="match status" value="1"/>
</dbReference>
<dbReference type="FunFam" id="1.10.8.60:FF:000003">
    <property type="entry name" value="Chromosomal replication initiator protein DnaA"/>
    <property type="match status" value="1"/>
</dbReference>
<dbReference type="FunFam" id="3.40.50.300:FF:000150">
    <property type="entry name" value="Chromosomal replication initiator protein DnaA"/>
    <property type="match status" value="1"/>
</dbReference>
<dbReference type="Gene3D" id="1.10.1750.10">
    <property type="match status" value="1"/>
</dbReference>
<dbReference type="Gene3D" id="1.10.8.60">
    <property type="match status" value="1"/>
</dbReference>
<dbReference type="Gene3D" id="3.40.50.300">
    <property type="entry name" value="P-loop containing nucleotide triphosphate hydrolases"/>
    <property type="match status" value="1"/>
</dbReference>
<dbReference type="HAMAP" id="MF_00377">
    <property type="entry name" value="DnaA_bact"/>
    <property type="match status" value="1"/>
</dbReference>
<dbReference type="InterPro" id="IPR003593">
    <property type="entry name" value="AAA+_ATPase"/>
</dbReference>
<dbReference type="InterPro" id="IPR001957">
    <property type="entry name" value="Chromosome_initiator_DnaA"/>
</dbReference>
<dbReference type="InterPro" id="IPR020591">
    <property type="entry name" value="Chromosome_initiator_DnaA-like"/>
</dbReference>
<dbReference type="InterPro" id="IPR018312">
    <property type="entry name" value="Chromosome_initiator_DnaA_CS"/>
</dbReference>
<dbReference type="InterPro" id="IPR013159">
    <property type="entry name" value="DnaA_C"/>
</dbReference>
<dbReference type="InterPro" id="IPR013317">
    <property type="entry name" value="DnaA_dom"/>
</dbReference>
<dbReference type="InterPro" id="IPR027417">
    <property type="entry name" value="P-loop_NTPase"/>
</dbReference>
<dbReference type="InterPro" id="IPR010921">
    <property type="entry name" value="Trp_repressor/repl_initiator"/>
</dbReference>
<dbReference type="NCBIfam" id="TIGR00362">
    <property type="entry name" value="DnaA"/>
    <property type="match status" value="1"/>
</dbReference>
<dbReference type="NCBIfam" id="NF010686">
    <property type="entry name" value="PRK14086.1"/>
    <property type="match status" value="1"/>
</dbReference>
<dbReference type="PANTHER" id="PTHR30050">
    <property type="entry name" value="CHROMOSOMAL REPLICATION INITIATOR PROTEIN DNAA"/>
    <property type="match status" value="1"/>
</dbReference>
<dbReference type="PANTHER" id="PTHR30050:SF2">
    <property type="entry name" value="CHROMOSOMAL REPLICATION INITIATOR PROTEIN DNAA"/>
    <property type="match status" value="1"/>
</dbReference>
<dbReference type="Pfam" id="PF00308">
    <property type="entry name" value="Bac_DnaA"/>
    <property type="match status" value="1"/>
</dbReference>
<dbReference type="Pfam" id="PF08299">
    <property type="entry name" value="Bac_DnaA_C"/>
    <property type="match status" value="1"/>
</dbReference>
<dbReference type="PRINTS" id="PR00051">
    <property type="entry name" value="DNAA"/>
</dbReference>
<dbReference type="SMART" id="SM00382">
    <property type="entry name" value="AAA"/>
    <property type="match status" value="1"/>
</dbReference>
<dbReference type="SMART" id="SM00760">
    <property type="entry name" value="Bac_DnaA_C"/>
    <property type="match status" value="1"/>
</dbReference>
<dbReference type="SUPFAM" id="SSF52540">
    <property type="entry name" value="P-loop containing nucleoside triphosphate hydrolases"/>
    <property type="match status" value="1"/>
</dbReference>
<dbReference type="SUPFAM" id="SSF48295">
    <property type="entry name" value="TrpR-like"/>
    <property type="match status" value="1"/>
</dbReference>
<dbReference type="PROSITE" id="PS01008">
    <property type="entry name" value="DNAA"/>
    <property type="match status" value="1"/>
</dbReference>
<evidence type="ECO:0000255" key="1">
    <source>
        <dbReference type="HAMAP-Rule" id="MF_00377"/>
    </source>
</evidence>
<gene>
    <name evidence="1" type="primary">dnaA</name>
    <name type="ordered locus">Lxx00010</name>
</gene>
<name>DNAA_LEIXX</name>
<keyword id="KW-0067">ATP-binding</keyword>
<keyword id="KW-0963">Cytoplasm</keyword>
<keyword id="KW-0235">DNA replication</keyword>
<keyword id="KW-0238">DNA-binding</keyword>
<keyword id="KW-0446">Lipid-binding</keyword>
<keyword id="KW-0547">Nucleotide-binding</keyword>
<keyword id="KW-1185">Reference proteome</keyword>